<reference key="1">
    <citation type="journal article" date="2002" name="Nature">
        <title>The genome sequence of Schizosaccharomyces pombe.</title>
        <authorList>
            <person name="Wood V."/>
            <person name="Gwilliam R."/>
            <person name="Rajandream M.A."/>
            <person name="Lyne M.H."/>
            <person name="Lyne R."/>
            <person name="Stewart A."/>
            <person name="Sgouros J.G."/>
            <person name="Peat N."/>
            <person name="Hayles J."/>
            <person name="Baker S.G."/>
            <person name="Basham D."/>
            <person name="Bowman S."/>
            <person name="Brooks K."/>
            <person name="Brown D."/>
            <person name="Brown S."/>
            <person name="Chillingworth T."/>
            <person name="Churcher C.M."/>
            <person name="Collins M."/>
            <person name="Connor R."/>
            <person name="Cronin A."/>
            <person name="Davis P."/>
            <person name="Feltwell T."/>
            <person name="Fraser A."/>
            <person name="Gentles S."/>
            <person name="Goble A."/>
            <person name="Hamlin N."/>
            <person name="Harris D.E."/>
            <person name="Hidalgo J."/>
            <person name="Hodgson G."/>
            <person name="Holroyd S."/>
            <person name="Hornsby T."/>
            <person name="Howarth S."/>
            <person name="Huckle E.J."/>
            <person name="Hunt S."/>
            <person name="Jagels K."/>
            <person name="James K.D."/>
            <person name="Jones L."/>
            <person name="Jones M."/>
            <person name="Leather S."/>
            <person name="McDonald S."/>
            <person name="McLean J."/>
            <person name="Mooney P."/>
            <person name="Moule S."/>
            <person name="Mungall K.L."/>
            <person name="Murphy L.D."/>
            <person name="Niblett D."/>
            <person name="Odell C."/>
            <person name="Oliver K."/>
            <person name="O'Neil S."/>
            <person name="Pearson D."/>
            <person name="Quail M.A."/>
            <person name="Rabbinowitsch E."/>
            <person name="Rutherford K.M."/>
            <person name="Rutter S."/>
            <person name="Saunders D."/>
            <person name="Seeger K."/>
            <person name="Sharp S."/>
            <person name="Skelton J."/>
            <person name="Simmonds M.N."/>
            <person name="Squares R."/>
            <person name="Squares S."/>
            <person name="Stevens K."/>
            <person name="Taylor K."/>
            <person name="Taylor R.G."/>
            <person name="Tivey A."/>
            <person name="Walsh S.V."/>
            <person name="Warren T."/>
            <person name="Whitehead S."/>
            <person name="Woodward J.R."/>
            <person name="Volckaert G."/>
            <person name="Aert R."/>
            <person name="Robben J."/>
            <person name="Grymonprez B."/>
            <person name="Weltjens I."/>
            <person name="Vanstreels E."/>
            <person name="Rieger M."/>
            <person name="Schaefer M."/>
            <person name="Mueller-Auer S."/>
            <person name="Gabel C."/>
            <person name="Fuchs M."/>
            <person name="Duesterhoeft A."/>
            <person name="Fritzc C."/>
            <person name="Holzer E."/>
            <person name="Moestl D."/>
            <person name="Hilbert H."/>
            <person name="Borzym K."/>
            <person name="Langer I."/>
            <person name="Beck A."/>
            <person name="Lehrach H."/>
            <person name="Reinhardt R."/>
            <person name="Pohl T.M."/>
            <person name="Eger P."/>
            <person name="Zimmermann W."/>
            <person name="Wedler H."/>
            <person name="Wambutt R."/>
            <person name="Purnelle B."/>
            <person name="Goffeau A."/>
            <person name="Cadieu E."/>
            <person name="Dreano S."/>
            <person name="Gloux S."/>
            <person name="Lelaure V."/>
            <person name="Mottier S."/>
            <person name="Galibert F."/>
            <person name="Aves S.J."/>
            <person name="Xiang Z."/>
            <person name="Hunt C."/>
            <person name="Moore K."/>
            <person name="Hurst S.M."/>
            <person name="Lucas M."/>
            <person name="Rochet M."/>
            <person name="Gaillardin C."/>
            <person name="Tallada V.A."/>
            <person name="Garzon A."/>
            <person name="Thode G."/>
            <person name="Daga R.R."/>
            <person name="Cruzado L."/>
            <person name="Jimenez J."/>
            <person name="Sanchez M."/>
            <person name="del Rey F."/>
            <person name="Benito J."/>
            <person name="Dominguez A."/>
            <person name="Revuelta J.L."/>
            <person name="Moreno S."/>
            <person name="Armstrong J."/>
            <person name="Forsburg S.L."/>
            <person name="Cerutti L."/>
            <person name="Lowe T."/>
            <person name="McCombie W.R."/>
            <person name="Paulsen I."/>
            <person name="Potashkin J."/>
            <person name="Shpakovski G.V."/>
            <person name="Ussery D."/>
            <person name="Barrell B.G."/>
            <person name="Nurse P."/>
        </authorList>
    </citation>
    <scope>NUCLEOTIDE SEQUENCE [LARGE SCALE GENOMIC DNA]</scope>
    <source>
        <strain>972 / ATCC 24843</strain>
    </source>
</reference>
<gene>
    <name type="ORF">SPBPB2B2.19c</name>
</gene>
<proteinExistence type="inferred from homology"/>
<protein>
    <recommendedName>
        <fullName>Uncharacterized membrane protein SPBPB2B2.19c</fullName>
    </recommendedName>
</protein>
<accession>P0CU15</accession>
<accession>Q9P3V8</accession>
<accession>Q9P7U6</accession>
<keyword id="KW-0256">Endoplasmic reticulum</keyword>
<keyword id="KW-0472">Membrane</keyword>
<keyword id="KW-1185">Reference proteome</keyword>
<keyword id="KW-0812">Transmembrane</keyword>
<keyword id="KW-1133">Transmembrane helix</keyword>
<sequence>MIDFVKSRDTVIQKSFFEEFNSQNREMGSFAYSGNSESVWTGENITSIWKTILINETGSYCVAARPMTMDGAEFNLDLMGYSVSEDQINNDEIGIWNYISVAEMGGVLLFLSYWIWTCLHFSKIIFPAQKVICLYIFLFALNQTLQECIEEYVFSSECIKYRQFYSVYEIIDFLRTNFYRLFVIYCALGFGITRTVPKYLMIKGISIVIALCSVYWISLYKDVYVVSEIFDMIQYEVSPAIWVYSICHLLKQCTSVTTYENASKARFFRRMLNAFIFIFCASPMLHYLSNIIFGNFDYRLSVIIGDLFTFMEKIAFPCYIMFPTHNEALAYNRNVAEEAQEKMI</sequence>
<name>YHEJ_SCHPO</name>
<comment type="subcellular location">
    <subcellularLocation>
        <location evidence="1">Endoplasmic reticulum</location>
    </subcellularLocation>
    <subcellularLocation>
        <location>Membrane</location>
        <topology evidence="3">Multi-pass membrane protein</topology>
    </subcellularLocation>
</comment>
<comment type="similarity">
    <text evidence="3">Belongs to the UPF0742 family.</text>
</comment>
<organism>
    <name type="scientific">Schizosaccharomyces pombe (strain 972 / ATCC 24843)</name>
    <name type="common">Fission yeast</name>
    <dbReference type="NCBI Taxonomy" id="284812"/>
    <lineage>
        <taxon>Eukaryota</taxon>
        <taxon>Fungi</taxon>
        <taxon>Dikarya</taxon>
        <taxon>Ascomycota</taxon>
        <taxon>Taphrinomycotina</taxon>
        <taxon>Schizosaccharomycetes</taxon>
        <taxon>Schizosaccharomycetales</taxon>
        <taxon>Schizosaccharomycetaceae</taxon>
        <taxon>Schizosaccharomyces</taxon>
    </lineage>
</organism>
<feature type="chain" id="PRO_0000437234" description="Uncharacterized membrane protein SPBPB2B2.19c">
    <location>
        <begin position="1"/>
        <end position="344"/>
    </location>
</feature>
<feature type="topological domain" description="Cytoplasmic" evidence="2">
    <location>
        <begin position="1"/>
        <end position="98"/>
    </location>
</feature>
<feature type="transmembrane region" description="Helical" evidence="2">
    <location>
        <begin position="99"/>
        <end position="119"/>
    </location>
</feature>
<feature type="topological domain" description="Lumenal" evidence="2">
    <location>
        <position position="120"/>
    </location>
</feature>
<feature type="transmembrane region" description="Helical" evidence="2">
    <location>
        <begin position="121"/>
        <end position="141"/>
    </location>
</feature>
<feature type="topological domain" description="Cytoplasmic" evidence="2">
    <location>
        <begin position="142"/>
        <end position="198"/>
    </location>
</feature>
<feature type="transmembrane region" description="Helical" evidence="2">
    <location>
        <begin position="199"/>
        <end position="219"/>
    </location>
</feature>
<feature type="topological domain" description="Lumenal" evidence="2">
    <location>
        <begin position="220"/>
        <end position="222"/>
    </location>
</feature>
<feature type="transmembrane region" description="Helical" evidence="2">
    <location>
        <begin position="223"/>
        <end position="243"/>
    </location>
</feature>
<feature type="topological domain" description="Cytoplasmic" evidence="2">
    <location>
        <begin position="244"/>
        <end position="273"/>
    </location>
</feature>
<feature type="transmembrane region" description="Helical" evidence="2">
    <location>
        <begin position="274"/>
        <end position="294"/>
    </location>
</feature>
<feature type="topological domain" description="Lumenal" evidence="2">
    <location>
        <begin position="295"/>
        <end position="344"/>
    </location>
</feature>
<evidence type="ECO:0000250" key="1">
    <source>
        <dbReference type="UniProtKB" id="P0CU14"/>
    </source>
</evidence>
<evidence type="ECO:0000255" key="2"/>
<evidence type="ECO:0000305" key="3"/>
<dbReference type="EMBL" id="CU329671">
    <property type="protein sequence ID" value="CAC21421.1"/>
    <property type="molecule type" value="Genomic_DNA"/>
</dbReference>
<dbReference type="PIR" id="T50274">
    <property type="entry name" value="T50274"/>
</dbReference>
<dbReference type="RefSeq" id="NP_596865.1">
    <property type="nucleotide sequence ID" value="NM_001023888.2"/>
</dbReference>
<dbReference type="STRING" id="284812.P0CU15"/>
<dbReference type="PaxDb" id="4896-SPBC1348.02.1"/>
<dbReference type="EnsemblFungi" id="SPBC1348.02.1">
    <property type="protein sequence ID" value="SPBC1348.02.1:pep"/>
    <property type="gene ID" value="SPBC1348.02"/>
</dbReference>
<dbReference type="EnsemblFungi" id="SPBPB2B2.19c.1">
    <property type="protein sequence ID" value="SPBPB2B2.19c.1:pep"/>
    <property type="gene ID" value="SPBPB2B2.19c"/>
</dbReference>
<dbReference type="KEGG" id="spo:2541343"/>
<dbReference type="KEGG" id="spo:2541576"/>
<dbReference type="PomBase" id="SPBPB2B2.19c"/>
<dbReference type="VEuPathDB" id="FungiDB:SPBC1348.02"/>
<dbReference type="VEuPathDB" id="FungiDB:SPBPB2B2.19c"/>
<dbReference type="InParanoid" id="P0CU15"/>
<dbReference type="OMA" id="LEIWINN"/>
<dbReference type="PRO" id="PR:P0CU15"/>
<dbReference type="Proteomes" id="UP000002485">
    <property type="component" value="Chromosome II"/>
</dbReference>
<dbReference type="GO" id="GO:0005783">
    <property type="term" value="C:endoplasmic reticulum"/>
    <property type="evidence" value="ECO:0007669"/>
    <property type="project" value="UniProtKB-SubCell"/>
</dbReference>
<dbReference type="GO" id="GO:0016020">
    <property type="term" value="C:membrane"/>
    <property type="evidence" value="ECO:0007669"/>
    <property type="project" value="UniProtKB-SubCell"/>
</dbReference>
<dbReference type="InterPro" id="IPR018291">
    <property type="entry name" value="5TM-prot_SCHPO"/>
</dbReference>
<dbReference type="Pfam" id="PF09437">
    <property type="entry name" value="Pombe_5TM"/>
    <property type="match status" value="1"/>
</dbReference>